<accession>B8F4V8</accession>
<reference key="1">
    <citation type="journal article" date="2009" name="J. Bacteriol.">
        <title>Complete genome sequence of Haemophilus parasuis SH0165.</title>
        <authorList>
            <person name="Yue M."/>
            <person name="Yang F."/>
            <person name="Yang J."/>
            <person name="Bei W."/>
            <person name="Cai X."/>
            <person name="Chen L."/>
            <person name="Dong J."/>
            <person name="Zhou R."/>
            <person name="Jin M."/>
            <person name="Jin Q."/>
            <person name="Chen H."/>
        </authorList>
    </citation>
    <scope>NUCLEOTIDE SEQUENCE [LARGE SCALE GENOMIC DNA]</scope>
    <source>
        <strain>SH0165</strain>
    </source>
</reference>
<organism>
    <name type="scientific">Glaesserella parasuis serovar 5 (strain SH0165)</name>
    <name type="common">Haemophilus parasuis</name>
    <dbReference type="NCBI Taxonomy" id="557723"/>
    <lineage>
        <taxon>Bacteria</taxon>
        <taxon>Pseudomonadati</taxon>
        <taxon>Pseudomonadota</taxon>
        <taxon>Gammaproteobacteria</taxon>
        <taxon>Pasteurellales</taxon>
        <taxon>Pasteurellaceae</taxon>
        <taxon>Glaesserella</taxon>
    </lineage>
</organism>
<dbReference type="EC" id="4.6.1.12" evidence="1"/>
<dbReference type="EMBL" id="CP001321">
    <property type="protein sequence ID" value="ACL32360.1"/>
    <property type="molecule type" value="Genomic_DNA"/>
</dbReference>
<dbReference type="RefSeq" id="WP_012621878.1">
    <property type="nucleotide sequence ID" value="NC_011852.1"/>
</dbReference>
<dbReference type="SMR" id="B8F4V8"/>
<dbReference type="STRING" id="557723.HAPS_0714"/>
<dbReference type="KEGG" id="hap:HAPS_0714"/>
<dbReference type="HOGENOM" id="CLU_084630_2_0_6"/>
<dbReference type="UniPathway" id="UPA00056">
    <property type="reaction ID" value="UER00095"/>
</dbReference>
<dbReference type="Proteomes" id="UP000006743">
    <property type="component" value="Chromosome"/>
</dbReference>
<dbReference type="GO" id="GO:0008685">
    <property type="term" value="F:2-C-methyl-D-erythritol 2,4-cyclodiphosphate synthase activity"/>
    <property type="evidence" value="ECO:0007669"/>
    <property type="project" value="UniProtKB-UniRule"/>
</dbReference>
<dbReference type="GO" id="GO:0046872">
    <property type="term" value="F:metal ion binding"/>
    <property type="evidence" value="ECO:0007669"/>
    <property type="project" value="UniProtKB-KW"/>
</dbReference>
<dbReference type="GO" id="GO:0019288">
    <property type="term" value="P:isopentenyl diphosphate biosynthetic process, methylerythritol 4-phosphate pathway"/>
    <property type="evidence" value="ECO:0007669"/>
    <property type="project" value="UniProtKB-UniRule"/>
</dbReference>
<dbReference type="GO" id="GO:0016114">
    <property type="term" value="P:terpenoid biosynthetic process"/>
    <property type="evidence" value="ECO:0007669"/>
    <property type="project" value="InterPro"/>
</dbReference>
<dbReference type="CDD" id="cd00554">
    <property type="entry name" value="MECDP_synthase"/>
    <property type="match status" value="1"/>
</dbReference>
<dbReference type="FunFam" id="3.30.1330.50:FF:000001">
    <property type="entry name" value="2-C-methyl-D-erythritol 2,4-cyclodiphosphate synthase"/>
    <property type="match status" value="1"/>
</dbReference>
<dbReference type="Gene3D" id="3.30.1330.50">
    <property type="entry name" value="2-C-methyl-D-erythritol 2,4-cyclodiphosphate synthase"/>
    <property type="match status" value="1"/>
</dbReference>
<dbReference type="HAMAP" id="MF_00107">
    <property type="entry name" value="IspF"/>
    <property type="match status" value="1"/>
</dbReference>
<dbReference type="InterPro" id="IPR003526">
    <property type="entry name" value="MECDP_synthase"/>
</dbReference>
<dbReference type="InterPro" id="IPR020555">
    <property type="entry name" value="MECDP_synthase_CS"/>
</dbReference>
<dbReference type="InterPro" id="IPR036571">
    <property type="entry name" value="MECDP_synthase_sf"/>
</dbReference>
<dbReference type="NCBIfam" id="TIGR00151">
    <property type="entry name" value="ispF"/>
    <property type="match status" value="1"/>
</dbReference>
<dbReference type="PANTHER" id="PTHR43181">
    <property type="entry name" value="2-C-METHYL-D-ERYTHRITOL 2,4-CYCLODIPHOSPHATE SYNTHASE, CHLOROPLASTIC"/>
    <property type="match status" value="1"/>
</dbReference>
<dbReference type="PANTHER" id="PTHR43181:SF1">
    <property type="entry name" value="2-C-METHYL-D-ERYTHRITOL 2,4-CYCLODIPHOSPHATE SYNTHASE, CHLOROPLASTIC"/>
    <property type="match status" value="1"/>
</dbReference>
<dbReference type="Pfam" id="PF02542">
    <property type="entry name" value="YgbB"/>
    <property type="match status" value="1"/>
</dbReference>
<dbReference type="SUPFAM" id="SSF69765">
    <property type="entry name" value="IpsF-like"/>
    <property type="match status" value="1"/>
</dbReference>
<dbReference type="PROSITE" id="PS01350">
    <property type="entry name" value="ISPF"/>
    <property type="match status" value="1"/>
</dbReference>
<feature type="chain" id="PRO_1000190711" description="2-C-methyl-D-erythritol 2,4-cyclodiphosphate synthase">
    <location>
        <begin position="1"/>
        <end position="167"/>
    </location>
</feature>
<feature type="binding site" evidence="1">
    <location>
        <begin position="9"/>
        <end position="11"/>
    </location>
    <ligand>
        <name>4-CDP-2-C-methyl-D-erythritol 2-phosphate</name>
        <dbReference type="ChEBI" id="CHEBI:57919"/>
    </ligand>
</feature>
<feature type="binding site" evidence="1">
    <location>
        <position position="9"/>
    </location>
    <ligand>
        <name>a divalent metal cation</name>
        <dbReference type="ChEBI" id="CHEBI:60240"/>
    </ligand>
</feature>
<feature type="binding site" evidence="1">
    <location>
        <position position="11"/>
    </location>
    <ligand>
        <name>a divalent metal cation</name>
        <dbReference type="ChEBI" id="CHEBI:60240"/>
    </ligand>
</feature>
<feature type="binding site" evidence="1">
    <location>
        <begin position="35"/>
        <end position="36"/>
    </location>
    <ligand>
        <name>4-CDP-2-C-methyl-D-erythritol 2-phosphate</name>
        <dbReference type="ChEBI" id="CHEBI:57919"/>
    </ligand>
</feature>
<feature type="binding site" evidence="1">
    <location>
        <position position="43"/>
    </location>
    <ligand>
        <name>a divalent metal cation</name>
        <dbReference type="ChEBI" id="CHEBI:60240"/>
    </ligand>
</feature>
<feature type="binding site" evidence="1">
    <location>
        <begin position="57"/>
        <end position="59"/>
    </location>
    <ligand>
        <name>4-CDP-2-C-methyl-D-erythritol 2-phosphate</name>
        <dbReference type="ChEBI" id="CHEBI:57919"/>
    </ligand>
</feature>
<feature type="binding site" evidence="1">
    <location>
        <begin position="62"/>
        <end position="66"/>
    </location>
    <ligand>
        <name>4-CDP-2-C-methyl-D-erythritol 2-phosphate</name>
        <dbReference type="ChEBI" id="CHEBI:57919"/>
    </ligand>
</feature>
<feature type="binding site" evidence="1">
    <location>
        <begin position="133"/>
        <end position="136"/>
    </location>
    <ligand>
        <name>4-CDP-2-C-methyl-D-erythritol 2-phosphate</name>
        <dbReference type="ChEBI" id="CHEBI:57919"/>
    </ligand>
</feature>
<feature type="binding site" evidence="1">
    <location>
        <position position="140"/>
    </location>
    <ligand>
        <name>4-CDP-2-C-methyl-D-erythritol 2-phosphate</name>
        <dbReference type="ChEBI" id="CHEBI:57919"/>
    </ligand>
</feature>
<feature type="binding site" evidence="1">
    <location>
        <position position="143"/>
    </location>
    <ligand>
        <name>4-CDP-2-C-methyl-D-erythritol 2-phosphate</name>
        <dbReference type="ChEBI" id="CHEBI:57919"/>
    </ligand>
</feature>
<feature type="site" description="Transition state stabilizer" evidence="1">
    <location>
        <position position="35"/>
    </location>
</feature>
<feature type="site" description="Transition state stabilizer" evidence="1">
    <location>
        <position position="134"/>
    </location>
</feature>
<protein>
    <recommendedName>
        <fullName evidence="1">2-C-methyl-D-erythritol 2,4-cyclodiphosphate synthase</fullName>
        <shortName evidence="1">MECDP-synthase</shortName>
        <shortName evidence="1">MECPP-synthase</shortName>
        <shortName evidence="1">MECPS</shortName>
        <ecNumber evidence="1">4.6.1.12</ecNumber>
    </recommendedName>
</protein>
<name>ISPF_GLAP5</name>
<comment type="function">
    <text evidence="1">Involved in the biosynthesis of isopentenyl diphosphate (IPP) and dimethylallyl diphosphate (DMAPP), two major building blocks of isoprenoid compounds. Catalyzes the conversion of 4-diphosphocytidyl-2-C-methyl-D-erythritol 2-phosphate (CDP-ME2P) to 2-C-methyl-D-erythritol 2,4-cyclodiphosphate (ME-CPP) with a corresponding release of cytidine 5-monophosphate (CMP).</text>
</comment>
<comment type="catalytic activity">
    <reaction evidence="1">
        <text>4-CDP-2-C-methyl-D-erythritol 2-phosphate = 2-C-methyl-D-erythritol 2,4-cyclic diphosphate + CMP</text>
        <dbReference type="Rhea" id="RHEA:23864"/>
        <dbReference type="ChEBI" id="CHEBI:57919"/>
        <dbReference type="ChEBI" id="CHEBI:58483"/>
        <dbReference type="ChEBI" id="CHEBI:60377"/>
        <dbReference type="EC" id="4.6.1.12"/>
    </reaction>
</comment>
<comment type="cofactor">
    <cofactor evidence="1">
        <name>a divalent metal cation</name>
        <dbReference type="ChEBI" id="CHEBI:60240"/>
    </cofactor>
    <text evidence="1">Binds 1 divalent metal cation per subunit.</text>
</comment>
<comment type="pathway">
    <text evidence="1">Isoprenoid biosynthesis; isopentenyl diphosphate biosynthesis via DXP pathway; isopentenyl diphosphate from 1-deoxy-D-xylulose 5-phosphate: step 4/6.</text>
</comment>
<comment type="subunit">
    <text evidence="1">Homotrimer.</text>
</comment>
<comment type="similarity">
    <text evidence="1">Belongs to the IspF family.</text>
</comment>
<gene>
    <name evidence="1" type="primary">ispF</name>
    <name type="ordered locus">HAPS_0714</name>
</gene>
<evidence type="ECO:0000255" key="1">
    <source>
        <dbReference type="HAMAP-Rule" id="MF_00107"/>
    </source>
</evidence>
<keyword id="KW-0414">Isoprene biosynthesis</keyword>
<keyword id="KW-0456">Lyase</keyword>
<keyword id="KW-0479">Metal-binding</keyword>
<keyword id="KW-1185">Reference proteome</keyword>
<proteinExistence type="inferred from homology"/>
<sequence>MIRIGHGFDVHAFGQDRPLMICGVAVPYHTGFIAHSDGDVALHALSDALIGAAALGDIGKLFPDTDMQYKNADSRKLLIEAYRQVQATGYVVGNVDVTIIAQAPKMRPYIDQMRQVIADDLNCDISCVNVKATTTEKLGFTGRGEGIACEAVALLIKPALCSSYRNI</sequence>